<gene>
    <name type="primary">tent2-a</name>
    <name type="synonym">gld2-a</name>
    <name type="synonym">papd4-a</name>
</gene>
<dbReference type="EC" id="2.7.7.19"/>
<dbReference type="EMBL" id="BC082438">
    <property type="protein sequence ID" value="AAH82438.1"/>
    <property type="molecule type" value="mRNA"/>
</dbReference>
<dbReference type="RefSeq" id="NP_001087892.1">
    <property type="nucleotide sequence ID" value="NM_001094423.1"/>
</dbReference>
<dbReference type="SMR" id="Q641A1"/>
<dbReference type="IntAct" id="Q641A1">
    <property type="interactions" value="5"/>
</dbReference>
<dbReference type="DNASU" id="447753"/>
<dbReference type="GeneID" id="447753"/>
<dbReference type="KEGG" id="xla:447753"/>
<dbReference type="AGR" id="Xenbase:XB-GENE-1217415"/>
<dbReference type="CTD" id="447753"/>
<dbReference type="Xenbase" id="XB-GENE-1217415">
    <property type="gene designation" value="tent2.S"/>
</dbReference>
<dbReference type="OMA" id="RTYAYAD"/>
<dbReference type="OrthoDB" id="2274644at2759"/>
<dbReference type="Proteomes" id="UP000186698">
    <property type="component" value="Chromosome 1S"/>
</dbReference>
<dbReference type="Bgee" id="447753">
    <property type="expression patterns" value="Expressed in egg cell and 19 other cell types or tissues"/>
</dbReference>
<dbReference type="GO" id="GO:0005737">
    <property type="term" value="C:cytoplasm"/>
    <property type="evidence" value="ECO:0007669"/>
    <property type="project" value="UniProtKB-SubCell"/>
</dbReference>
<dbReference type="GO" id="GO:0005524">
    <property type="term" value="F:ATP binding"/>
    <property type="evidence" value="ECO:0007669"/>
    <property type="project" value="UniProtKB-KW"/>
</dbReference>
<dbReference type="GO" id="GO:0046872">
    <property type="term" value="F:metal ion binding"/>
    <property type="evidence" value="ECO:0007669"/>
    <property type="project" value="UniProtKB-KW"/>
</dbReference>
<dbReference type="GO" id="GO:1990817">
    <property type="term" value="F:poly(A) RNA polymerase activity"/>
    <property type="evidence" value="ECO:0000250"/>
    <property type="project" value="UniProtKB"/>
</dbReference>
<dbReference type="GO" id="GO:0031124">
    <property type="term" value="P:mRNA 3'-end processing"/>
    <property type="evidence" value="ECO:0000250"/>
    <property type="project" value="UniProtKB"/>
</dbReference>
<dbReference type="GO" id="GO:2000626">
    <property type="term" value="P:negative regulation of miRNA catabolic process"/>
    <property type="evidence" value="ECO:0000250"/>
    <property type="project" value="UniProtKB"/>
</dbReference>
<dbReference type="GO" id="GO:0048477">
    <property type="term" value="P:oogenesis"/>
    <property type="evidence" value="ECO:0007669"/>
    <property type="project" value="UniProtKB-KW"/>
</dbReference>
<dbReference type="GO" id="GO:0031123">
    <property type="term" value="P:RNA 3'-end processing"/>
    <property type="evidence" value="ECO:0000318"/>
    <property type="project" value="GO_Central"/>
</dbReference>
<dbReference type="CDD" id="cd05402">
    <property type="entry name" value="NT_PAP_TUTase"/>
    <property type="match status" value="1"/>
</dbReference>
<dbReference type="FunFam" id="1.10.1410.10:FF:000007">
    <property type="entry name" value="poly(A) RNA polymerase GLD2 isoform X1"/>
    <property type="match status" value="1"/>
</dbReference>
<dbReference type="FunFam" id="3.30.460.10:FF:000022">
    <property type="entry name" value="poly(A) RNA polymerase GLD2 isoform X1"/>
    <property type="match status" value="1"/>
</dbReference>
<dbReference type="Gene3D" id="1.10.1410.10">
    <property type="match status" value="1"/>
</dbReference>
<dbReference type="Gene3D" id="3.30.460.10">
    <property type="entry name" value="Beta Polymerase, domain 2"/>
    <property type="match status" value="1"/>
</dbReference>
<dbReference type="InterPro" id="IPR054708">
    <property type="entry name" value="MTPAP-like_central"/>
</dbReference>
<dbReference type="InterPro" id="IPR043519">
    <property type="entry name" value="NT_sf"/>
</dbReference>
<dbReference type="InterPro" id="IPR002058">
    <property type="entry name" value="PAP_assoc"/>
</dbReference>
<dbReference type="PANTHER" id="PTHR12271">
    <property type="entry name" value="POLY A POLYMERASE CID PAP -RELATED"/>
    <property type="match status" value="1"/>
</dbReference>
<dbReference type="PANTHER" id="PTHR12271:SF40">
    <property type="entry name" value="POLY(A) RNA POLYMERASE GLD2"/>
    <property type="match status" value="1"/>
</dbReference>
<dbReference type="Pfam" id="PF22600">
    <property type="entry name" value="MTPAP-like_central"/>
    <property type="match status" value="1"/>
</dbReference>
<dbReference type="Pfam" id="PF03828">
    <property type="entry name" value="PAP_assoc"/>
    <property type="match status" value="1"/>
</dbReference>
<dbReference type="SUPFAM" id="SSF81301">
    <property type="entry name" value="Nucleotidyltransferase"/>
    <property type="match status" value="1"/>
</dbReference>
<dbReference type="SUPFAM" id="SSF81631">
    <property type="entry name" value="PAP/OAS1 substrate-binding domain"/>
    <property type="match status" value="1"/>
</dbReference>
<proteinExistence type="evidence at protein level"/>
<sequence length="509" mass="57982">MYPNSPSLGRIPLPLPCEQQQQASGYSDKLPVSAAPELLSPEQFIQASLNIQKHANLSRMLMNGNVLTVPPVSSPPWAYLNHSPLISPGSPSSSFQNRKRRSDEGNVSYDVKRQRFHSPQEQTVNHQAVPLRGDLRCSYPGSPAFPLLQSPSPPVLKEHVSNSGDCWLYDHIDTTLPVAEDKLSQQILDLFQALQQQVCDIKKKDICRAELQREIQQIFPQSRLYLVGSSLNGFGTRISDADLCLVLKEEPMNQHTEATQILGLLHKLFYTRLSYIERLQFIRAKVPIVKFRDKVSGAEFDLNVNNVVGIRNTFLLRTYAYLESRVRPLVLVIKKWANHHGINDASRGTLSSYTLVLMVLHYLQTLPEPILPSLQKKYPECFDLSMQLNLVHHAPRNIPPYLSKNETPLGDLLLGFLKYFAVEFDWSKDIISVREGKALPRSDDYLWRNKYICVEEPFDGTNTARAVYERQKFDMIRAEFLKAWGALRDDRDLYSLLPVTAIVKKMNSL</sequence>
<name>GLD2A_XENLA</name>
<protein>
    <recommendedName>
        <fullName evidence="5">Poly(A) RNA polymerase GLD2-A</fullName>
        <ecNumber>2.7.7.19</ecNumber>
    </recommendedName>
    <alternativeName>
        <fullName>PAP-associated domain-containing protein 4-A</fullName>
    </alternativeName>
</protein>
<reference key="1">
    <citation type="submission" date="2004-09" db="EMBL/GenBank/DDBJ databases">
        <authorList>
            <consortium name="NIH - Xenopus Gene Collection (XGC) project"/>
        </authorList>
    </citation>
    <scope>NUCLEOTIDE SEQUENCE [LARGE SCALE MRNA]</scope>
    <source>
        <tissue>Oocyte</tissue>
    </source>
</reference>
<reference key="2">
    <citation type="journal article" date="2004" name="Cell">
        <title>Symplekin and xGLD-2 are required for CPEB-mediated cytoplasmic polyadenylation.</title>
        <authorList>
            <person name="Barnard D.C."/>
            <person name="Ryan K."/>
            <person name="Manley J.L."/>
            <person name="Richter J.D."/>
        </authorList>
    </citation>
    <scope>INTERACTION WITH SYMPK</scope>
</reference>
<reference key="3">
    <citation type="journal article" date="2005" name="RNA">
        <title>Vertebrate GLD2 poly(A) polymerases in the germline and the brain.</title>
        <authorList>
            <person name="Rouhana L."/>
            <person name="Wang L."/>
            <person name="Buter N."/>
            <person name="Kwak J.E."/>
            <person name="Schiltz C.A."/>
            <person name="Gonzalez T."/>
            <person name="Kelley A.E."/>
            <person name="Landry C.F."/>
            <person name="Wickens M."/>
        </authorList>
    </citation>
    <scope>FUNCTION</scope>
    <scope>ENZYME ACTIVITY</scope>
    <scope>SUBCELLULAR LOCATION</scope>
    <scope>DEVELOPMENTAL STAGE</scope>
    <scope>INTERACTION WITH CPEB1 AND CPSF1</scope>
    <scope>MUTAGENESIS OF ASP-242</scope>
</reference>
<keyword id="KW-0067">ATP-binding</keyword>
<keyword id="KW-0963">Cytoplasm</keyword>
<keyword id="KW-0217">Developmental protein</keyword>
<keyword id="KW-0221">Differentiation</keyword>
<keyword id="KW-0460">Magnesium</keyword>
<keyword id="KW-0464">Manganese</keyword>
<keyword id="KW-0479">Metal-binding</keyword>
<keyword id="KW-0507">mRNA processing</keyword>
<keyword id="KW-0547">Nucleotide-binding</keyword>
<keyword id="KW-0896">Oogenesis</keyword>
<keyword id="KW-1185">Reference proteome</keyword>
<keyword id="KW-0808">Transferase</keyword>
<organism>
    <name type="scientific">Xenopus laevis</name>
    <name type="common">African clawed frog</name>
    <dbReference type="NCBI Taxonomy" id="8355"/>
    <lineage>
        <taxon>Eukaryota</taxon>
        <taxon>Metazoa</taxon>
        <taxon>Chordata</taxon>
        <taxon>Craniata</taxon>
        <taxon>Vertebrata</taxon>
        <taxon>Euteleostomi</taxon>
        <taxon>Amphibia</taxon>
        <taxon>Batrachia</taxon>
        <taxon>Anura</taxon>
        <taxon>Pipoidea</taxon>
        <taxon>Pipidae</taxon>
        <taxon>Xenopodinae</taxon>
        <taxon>Xenopus</taxon>
        <taxon>Xenopus</taxon>
    </lineage>
</organism>
<comment type="function">
    <text evidence="1 4">Cytoplasmic poly(A) RNA polymerase that adds successive AMP monomers to the 3'-end of specific RNAs, forming a poly(A) tail. In contrast to the canonical nuclear poly(A) RNA polymerase, it only adds poly(A) to selected cytoplasmic mRNAs during oocyte maturation. Plays a central role during oocyte maturation by mediating polyadenylation of dormant mRNAs, which contain 5'AAUAAA-3' sequence in their 3'UTR. In immature oocytes, polyadenylation of poly(A) tails is counteracted by the ribonuclease parn. During maturation parn is excluded from the ribonucleoprotein complex, allowing poly(A) elongation and activation of mRNAs. May not play a role in replication-dependent histone mRNA degradation (By similarity).</text>
</comment>
<comment type="catalytic activity">
    <reaction evidence="4">
        <text>RNA(n) + ATP = RNA(n)-3'-adenine ribonucleotide + diphosphate</text>
        <dbReference type="Rhea" id="RHEA:11332"/>
        <dbReference type="Rhea" id="RHEA-COMP:14527"/>
        <dbReference type="Rhea" id="RHEA-COMP:17347"/>
        <dbReference type="ChEBI" id="CHEBI:30616"/>
        <dbReference type="ChEBI" id="CHEBI:33019"/>
        <dbReference type="ChEBI" id="CHEBI:140395"/>
        <dbReference type="ChEBI" id="CHEBI:173115"/>
        <dbReference type="EC" id="2.7.7.19"/>
    </reaction>
</comment>
<comment type="cofactor">
    <cofactor evidence="1">
        <name>Mg(2+)</name>
        <dbReference type="ChEBI" id="CHEBI:18420"/>
    </cofactor>
    <cofactor evidence="1">
        <name>Mn(2+)</name>
        <dbReference type="ChEBI" id="CHEBI:29035"/>
    </cofactor>
</comment>
<comment type="subunit">
    <text evidence="3 4">Component of a complex at least composed of cpeb1, cpsf1, tent2/gld2, pabpc1/ePAB, parn and sympk. Following oocyte maturation, parn is expelled from the complex. Interacts with rbfox2 and sympk.</text>
</comment>
<comment type="interaction">
    <interactant intactId="EBI-11474136">
        <id>Q641A1</id>
    </interactant>
    <interactant intactId="EBI-11474081">
        <id>Q91808</id>
        <label>msi1.L</label>
    </interactant>
    <organismsDiffer>false</organismsDiffer>
    <experiments>2</experiments>
</comment>
<comment type="subcellular location">
    <subcellularLocation>
        <location evidence="4">Cytoplasm</location>
    </subcellularLocation>
</comment>
<comment type="developmental stage">
    <text evidence="4">Present in oocytes.</text>
</comment>
<comment type="similarity">
    <text evidence="5">Belongs to the DNA polymerase type-B-like family. GLD2 subfamily.</text>
</comment>
<evidence type="ECO:0000250" key="1"/>
<evidence type="ECO:0000256" key="2">
    <source>
        <dbReference type="SAM" id="MobiDB-lite"/>
    </source>
</evidence>
<evidence type="ECO:0000269" key="3">
    <source>
    </source>
</evidence>
<evidence type="ECO:0000269" key="4">
    <source>
    </source>
</evidence>
<evidence type="ECO:0000305" key="5"/>
<feature type="chain" id="PRO_0000341553" description="Poly(A) RNA polymerase GLD2-A">
    <location>
        <begin position="1"/>
        <end position="509"/>
    </location>
</feature>
<feature type="domain" description="PAP-associated">
    <location>
        <begin position="409"/>
        <end position="462"/>
    </location>
</feature>
<feature type="region of interest" description="Disordered" evidence="2">
    <location>
        <begin position="88"/>
        <end position="107"/>
    </location>
</feature>
<feature type="binding site" evidence="1">
    <location>
        <position position="240"/>
    </location>
    <ligand>
        <name>Mg(2+)</name>
        <dbReference type="ChEBI" id="CHEBI:18420"/>
        <note>catalytic</note>
    </ligand>
</feature>
<feature type="binding site" evidence="1">
    <location>
        <position position="242"/>
    </location>
    <ligand>
        <name>Mg(2+)</name>
        <dbReference type="ChEBI" id="CHEBI:18420"/>
        <note>catalytic</note>
    </ligand>
</feature>
<feature type="mutagenesis site" description="Loss of activity." evidence="4">
    <original>D</original>
    <variation>A</variation>
    <location>
        <position position="242"/>
    </location>
</feature>
<accession>Q641A1</accession>